<protein>
    <recommendedName>
        <fullName>Guanine nucleotide-binding protein-like 3 homolog</fullName>
    </recommendedName>
    <alternativeName>
        <fullName>Nucleostemin-1</fullName>
    </alternativeName>
</protein>
<gene>
    <name evidence="7" type="primary">nst-1</name>
    <name evidence="7" type="ORF">K01C8.9</name>
</gene>
<organism>
    <name type="scientific">Caenorhabditis elegans</name>
    <dbReference type="NCBI Taxonomy" id="6239"/>
    <lineage>
        <taxon>Eukaryota</taxon>
        <taxon>Metazoa</taxon>
        <taxon>Ecdysozoa</taxon>
        <taxon>Nematoda</taxon>
        <taxon>Chromadorea</taxon>
        <taxon>Rhabditida</taxon>
        <taxon>Rhabditina</taxon>
        <taxon>Rhabditomorpha</taxon>
        <taxon>Rhabditoidea</taxon>
        <taxon>Rhabditidae</taxon>
        <taxon>Peloderinae</taxon>
        <taxon>Caenorhabditis</taxon>
    </lineage>
</organism>
<sequence length="556" mass="62339">MAKYCLKKTSKRVSCAKRYKIEKKVRDHNRKVKKEAKKNGTTNKKEKTISVPNSCPFKEEILVQAEQEREKIKVRQEAAKEAAKIHRIEKRKNNLPANFESMVAKASKQGTEFDKKVASAAEHEKFNTLDDKTIKAYASEVRKTVEIADVIIQVLDARDPLGSRSKSVEDQVLKGGKRLVLLLNKIDLVPRENVQKWLEYLRGQFPTIAFKASTQEQKSNIGRFNSAILNNTETSKCVGADIVMKILANYCRNKDIKTSIRVGVVGFPNVGKSSVINSLKRRKACNVGNLPGITKEIQEVELDKNIRLIDSPGVILVSQKDLDPIEVALKNAIRVDNLLDPIAPVHAILRRCSKETIMLHYNLADFNSVDQFLAQLARRIGKLRRGARPDVNAAAKRVLNDWNTGKLRYYTHPPEQGTAKEDIVVPAEVVSQFSKEFDIDAIAEEQNQIVEGLPMESDIIAPHNSDEEEDDDDEMETDVNEKKQTVTSGRKVKGPTKDDDKPVLPESLALEGNVQLNKLIKTAIKKQKKKSKKTANRADKLSDSLGNMLGGDAMEM</sequence>
<name>GNL3_CAEEL</name>
<keyword id="KW-0175">Coiled coil</keyword>
<keyword id="KW-0342">GTP-binding</keyword>
<keyword id="KW-0547">Nucleotide-binding</keyword>
<keyword id="KW-0539">Nucleus</keyword>
<keyword id="KW-1185">Reference proteome</keyword>
<dbReference type="EMBL" id="BX284602">
    <property type="protein sequence ID" value="CAA88860.1"/>
    <property type="molecule type" value="Genomic_DNA"/>
</dbReference>
<dbReference type="PIR" id="T23172">
    <property type="entry name" value="T23172"/>
</dbReference>
<dbReference type="RefSeq" id="NP_495749.1">
    <property type="nucleotide sequence ID" value="NM_063348.7"/>
</dbReference>
<dbReference type="SMR" id="Q21086"/>
<dbReference type="BioGRID" id="39658">
    <property type="interactions" value="9"/>
</dbReference>
<dbReference type="FunCoup" id="Q21086">
    <property type="interactions" value="3171"/>
</dbReference>
<dbReference type="IntAct" id="Q21086">
    <property type="interactions" value="1"/>
</dbReference>
<dbReference type="STRING" id="6239.K01C8.9.2"/>
<dbReference type="iPTMnet" id="Q21086"/>
<dbReference type="PaxDb" id="6239-K01C8.9"/>
<dbReference type="PeptideAtlas" id="Q21086"/>
<dbReference type="EnsemblMetazoa" id="K01C8.9.1">
    <property type="protein sequence ID" value="K01C8.9.1"/>
    <property type="gene ID" value="WBGene00003821"/>
</dbReference>
<dbReference type="GeneID" id="174329"/>
<dbReference type="KEGG" id="cel:CELE_K01C8.9"/>
<dbReference type="UCSC" id="K01C8.9">
    <property type="organism name" value="c. elegans"/>
</dbReference>
<dbReference type="AGR" id="WB:WBGene00003821"/>
<dbReference type="CTD" id="174329"/>
<dbReference type="WormBase" id="K01C8.9">
    <property type="protein sequence ID" value="CE02270"/>
    <property type="gene ID" value="WBGene00003821"/>
    <property type="gene designation" value="nst-1"/>
</dbReference>
<dbReference type="eggNOG" id="KOG2484">
    <property type="taxonomic scope" value="Eukaryota"/>
</dbReference>
<dbReference type="GeneTree" id="ENSGT00940000166920"/>
<dbReference type="HOGENOM" id="CLU_011106_5_3_1"/>
<dbReference type="InParanoid" id="Q21086"/>
<dbReference type="OMA" id="NWIKYFR"/>
<dbReference type="OrthoDB" id="444945at2759"/>
<dbReference type="PhylomeDB" id="Q21086"/>
<dbReference type="Reactome" id="R-CEL-6791226">
    <property type="pathway name" value="Major pathway of rRNA processing in the nucleolus and cytosol"/>
</dbReference>
<dbReference type="PRO" id="PR:Q21086"/>
<dbReference type="Proteomes" id="UP000001940">
    <property type="component" value="Chromosome II"/>
</dbReference>
<dbReference type="Bgee" id="WBGene00003821">
    <property type="expression patterns" value="Expressed in germ line (C elegans) and 4 other cell types or tissues"/>
</dbReference>
<dbReference type="GO" id="GO:0005730">
    <property type="term" value="C:nucleolus"/>
    <property type="evidence" value="ECO:0000314"/>
    <property type="project" value="WormBase"/>
</dbReference>
<dbReference type="GO" id="GO:0005654">
    <property type="term" value="C:nucleoplasm"/>
    <property type="evidence" value="ECO:0000314"/>
    <property type="project" value="WormBase"/>
</dbReference>
<dbReference type="GO" id="GO:0005634">
    <property type="term" value="C:nucleus"/>
    <property type="evidence" value="ECO:0000250"/>
    <property type="project" value="UniProtKB"/>
</dbReference>
<dbReference type="GO" id="GO:0005525">
    <property type="term" value="F:GTP binding"/>
    <property type="evidence" value="ECO:0000250"/>
    <property type="project" value="UniProtKB"/>
</dbReference>
<dbReference type="GO" id="GO:0003924">
    <property type="term" value="F:GTPase activity"/>
    <property type="evidence" value="ECO:0007669"/>
    <property type="project" value="InterPro"/>
</dbReference>
<dbReference type="GO" id="GO:0007281">
    <property type="term" value="P:germ cell development"/>
    <property type="evidence" value="ECO:0000315"/>
    <property type="project" value="WormBase"/>
</dbReference>
<dbReference type="GO" id="GO:0002119">
    <property type="term" value="P:nematode larval development"/>
    <property type="evidence" value="ECO:0000315"/>
    <property type="project" value="WormBase"/>
</dbReference>
<dbReference type="GO" id="GO:0042127">
    <property type="term" value="P:regulation of cell population proliferation"/>
    <property type="evidence" value="ECO:0000250"/>
    <property type="project" value="UniProtKB"/>
</dbReference>
<dbReference type="GO" id="GO:0040014">
    <property type="term" value="P:regulation of multicellular organism growth"/>
    <property type="evidence" value="ECO:0000315"/>
    <property type="project" value="WormBase"/>
</dbReference>
<dbReference type="CDD" id="cd04178">
    <property type="entry name" value="Nucleostemin_like"/>
    <property type="match status" value="1"/>
</dbReference>
<dbReference type="FunFam" id="1.10.1580.10:FF:000002">
    <property type="entry name" value="Guanine nucleotide-binding protein-like 3 (nucleolar)-like"/>
    <property type="match status" value="1"/>
</dbReference>
<dbReference type="FunFam" id="3.40.50.300:FF:000493">
    <property type="entry name" value="Guanine nucleotide-binding protein-like 3-like protein"/>
    <property type="match status" value="1"/>
</dbReference>
<dbReference type="Gene3D" id="1.10.1580.10">
    <property type="match status" value="1"/>
</dbReference>
<dbReference type="Gene3D" id="3.40.50.300">
    <property type="entry name" value="P-loop containing nucleotide triphosphate hydrolases"/>
    <property type="match status" value="1"/>
</dbReference>
<dbReference type="InterPro" id="IPR030378">
    <property type="entry name" value="G_CP_dom"/>
</dbReference>
<dbReference type="InterPro" id="IPR014813">
    <property type="entry name" value="Gnl3_N_dom"/>
</dbReference>
<dbReference type="InterPro" id="IPR006073">
    <property type="entry name" value="GTP-bd"/>
</dbReference>
<dbReference type="InterPro" id="IPR023179">
    <property type="entry name" value="GTP-bd_ortho_bundle_sf"/>
</dbReference>
<dbReference type="InterPro" id="IPR027417">
    <property type="entry name" value="P-loop_NTPase"/>
</dbReference>
<dbReference type="InterPro" id="IPR000795">
    <property type="entry name" value="T_Tr_GTP-bd_dom"/>
</dbReference>
<dbReference type="InterPro" id="IPR050755">
    <property type="entry name" value="TRAFAC_YlqF/YawG_RiboMat"/>
</dbReference>
<dbReference type="PANTHER" id="PTHR11089">
    <property type="entry name" value="GTP-BINDING PROTEIN-RELATED"/>
    <property type="match status" value="1"/>
</dbReference>
<dbReference type="PANTHER" id="PTHR11089:SF30">
    <property type="entry name" value="GUANINE NUCLEOTIDE-BINDING PROTEIN-LIKE 3 HOMOLOG"/>
    <property type="match status" value="1"/>
</dbReference>
<dbReference type="Pfam" id="PF08701">
    <property type="entry name" value="GN3L_Grn1"/>
    <property type="match status" value="1"/>
</dbReference>
<dbReference type="Pfam" id="PF00009">
    <property type="entry name" value="GTP_EFTU"/>
    <property type="match status" value="1"/>
</dbReference>
<dbReference type="Pfam" id="PF01926">
    <property type="entry name" value="MMR_HSR1"/>
    <property type="match status" value="1"/>
</dbReference>
<dbReference type="PRINTS" id="PR00326">
    <property type="entry name" value="GTP1OBG"/>
</dbReference>
<dbReference type="SUPFAM" id="SSF52540">
    <property type="entry name" value="P-loop containing nucleoside triphosphate hydrolases"/>
    <property type="match status" value="1"/>
</dbReference>
<dbReference type="PROSITE" id="PS51721">
    <property type="entry name" value="G_CP"/>
    <property type="match status" value="1"/>
</dbReference>
<feature type="chain" id="PRO_0000122450" description="Guanine nucleotide-binding protein-like 3 homolog">
    <location>
        <begin position="1"/>
        <end position="556"/>
    </location>
</feature>
<feature type="domain" description="CP-type G" evidence="3">
    <location>
        <begin position="138"/>
        <end position="317"/>
    </location>
</feature>
<feature type="region of interest" description="Disordered" evidence="4">
    <location>
        <begin position="29"/>
        <end position="50"/>
    </location>
</feature>
<feature type="region of interest" description="Disordered" evidence="4">
    <location>
        <begin position="461"/>
        <end position="508"/>
    </location>
</feature>
<feature type="region of interest" description="Disordered" evidence="4">
    <location>
        <begin position="525"/>
        <end position="556"/>
    </location>
</feature>
<feature type="coiled-coil region" evidence="2">
    <location>
        <begin position="58"/>
        <end position="95"/>
    </location>
</feature>
<feature type="compositionally biased region" description="Acidic residues" evidence="4">
    <location>
        <begin position="466"/>
        <end position="478"/>
    </location>
</feature>
<feature type="compositionally biased region" description="Basic residues" evidence="4">
    <location>
        <begin position="525"/>
        <end position="535"/>
    </location>
</feature>
<feature type="binding site" evidence="2">
    <location>
        <begin position="184"/>
        <end position="187"/>
    </location>
    <ligand>
        <name>GTP</name>
        <dbReference type="ChEBI" id="CHEBI:37565"/>
    </ligand>
</feature>
<feature type="binding site" evidence="2">
    <location>
        <begin position="266"/>
        <end position="273"/>
    </location>
    <ligand>
        <name>GTP</name>
        <dbReference type="ChEBI" id="CHEBI:37565"/>
    </ligand>
</feature>
<feature type="binding site" evidence="2">
    <location>
        <begin position="310"/>
        <end position="313"/>
    </location>
    <ligand>
        <name>GTP</name>
        <dbReference type="ChEBI" id="CHEBI:37565"/>
    </ligand>
</feature>
<reference key="1">
    <citation type="journal article" date="1998" name="Science">
        <title>Genome sequence of the nematode C. elegans: a platform for investigating biology.</title>
        <authorList>
            <consortium name="The C. elegans sequencing consortium"/>
        </authorList>
    </citation>
    <scope>NUCLEOTIDE SEQUENCE [LARGE SCALE GENOMIC DNA]</scope>
    <source>
        <strain>Bristol N2</strain>
    </source>
</reference>
<reference key="2">
    <citation type="book" date="2004" name="Proceedings of the 2004 East coast worm meeting">
        <title>Functional genomic characterization of germline stem cells in C. elegans.</title>
        <authorList>
            <person name="Yang Z."/>
            <person name="Banfill M."/>
            <person name="Reinke V."/>
        </authorList>
    </citation>
    <scope>FUNCTION</scope>
</reference>
<reference key="3">
    <citation type="journal article" date="2008" name="Curr. Biol.">
        <title>ced-4 and proto-oncogene tfg-1 antagonistically regulate cell size and apoptosis in C. elegans.</title>
        <authorList>
            <person name="Chen L."/>
            <person name="McCloskey T."/>
            <person name="Joshi P.M."/>
            <person name="Rothman J.H."/>
        </authorList>
    </citation>
    <scope>DISRUPTION PHENOTYPE</scope>
</reference>
<proteinExistence type="inferred from homology"/>
<evidence type="ECO:0000250" key="1"/>
<evidence type="ECO:0000255" key="2"/>
<evidence type="ECO:0000255" key="3">
    <source>
        <dbReference type="PROSITE-ProRule" id="PRU01058"/>
    </source>
</evidence>
<evidence type="ECO:0000256" key="4">
    <source>
        <dbReference type="SAM" id="MobiDB-lite"/>
    </source>
</evidence>
<evidence type="ECO:0000269" key="5">
    <source>
    </source>
</evidence>
<evidence type="ECO:0000269" key="6">
    <source ref="2"/>
</evidence>
<evidence type="ECO:0000312" key="7">
    <source>
        <dbReference type="WormBase" id="K01C8.9"/>
    </source>
</evidence>
<comment type="function">
    <text evidence="6">May play a role in regulating cellular proliferation in both germline and somatic tissues.</text>
</comment>
<comment type="subcellular location">
    <subcellularLocation>
        <location evidence="1">Nucleus</location>
    </subcellularLocation>
</comment>
<comment type="domain">
    <text>In contrast to other GTP-binding proteins, this family is characterized by a circular permutation of the GTPase motifs described by a G4-G1-G3 pattern.</text>
</comment>
<comment type="disruption phenotype">
    <text evidence="5">RNAi-mediated knockdown results in a reduced body length (PubMed:18635357). This phenotype in suppressed in a ced-4 n1162 mutant background (PubMed:18635357).</text>
</comment>
<comment type="similarity">
    <text evidence="3">Belongs to the TRAFAC class YlqF/YawG GTPase family.</text>
</comment>
<accession>Q21086</accession>